<proteinExistence type="inferred from homology"/>
<organism>
    <name type="scientific">Salmonella agona (strain SL483)</name>
    <dbReference type="NCBI Taxonomy" id="454166"/>
    <lineage>
        <taxon>Bacteria</taxon>
        <taxon>Pseudomonadati</taxon>
        <taxon>Pseudomonadota</taxon>
        <taxon>Gammaproteobacteria</taxon>
        <taxon>Enterobacterales</taxon>
        <taxon>Enterobacteriaceae</taxon>
        <taxon>Salmonella</taxon>
    </lineage>
</organism>
<feature type="chain" id="PRO_1000191578" description="Endonuclease V">
    <location>
        <begin position="1"/>
        <end position="223"/>
    </location>
</feature>
<feature type="binding site" evidence="1">
    <location>
        <position position="35"/>
    </location>
    <ligand>
        <name>Mg(2+)</name>
        <dbReference type="ChEBI" id="CHEBI:18420"/>
    </ligand>
</feature>
<feature type="binding site" evidence="1">
    <location>
        <position position="103"/>
    </location>
    <ligand>
        <name>Mg(2+)</name>
        <dbReference type="ChEBI" id="CHEBI:18420"/>
    </ligand>
</feature>
<feature type="site" description="Interaction with target DNA" evidence="1">
    <location>
        <position position="73"/>
    </location>
</feature>
<comment type="function">
    <text evidence="1">DNA repair enzyme involved in the repair of deaminated bases. Selectively cleaves double-stranded DNA at the second phosphodiester bond 3' to a deoxyinosine leaving behind the intact lesion on the nicked DNA.</text>
</comment>
<comment type="catalytic activity">
    <reaction evidence="1">
        <text>Endonucleolytic cleavage at apurinic or apyrimidinic sites to products with a 5'-phosphate.</text>
        <dbReference type="EC" id="3.1.21.7"/>
    </reaction>
</comment>
<comment type="cofactor">
    <cofactor evidence="1">
        <name>Mg(2+)</name>
        <dbReference type="ChEBI" id="CHEBI:18420"/>
    </cofactor>
</comment>
<comment type="subcellular location">
    <subcellularLocation>
        <location evidence="1">Cytoplasm</location>
    </subcellularLocation>
</comment>
<comment type="similarity">
    <text evidence="1">Belongs to the endonuclease V family.</text>
</comment>
<keyword id="KW-0963">Cytoplasm</keyword>
<keyword id="KW-0227">DNA damage</keyword>
<keyword id="KW-0234">DNA repair</keyword>
<keyword id="KW-0255">Endonuclease</keyword>
<keyword id="KW-0378">Hydrolase</keyword>
<keyword id="KW-0460">Magnesium</keyword>
<keyword id="KW-0479">Metal-binding</keyword>
<keyword id="KW-0540">Nuclease</keyword>
<accession>B5F1I1</accession>
<evidence type="ECO:0000255" key="1">
    <source>
        <dbReference type="HAMAP-Rule" id="MF_00801"/>
    </source>
</evidence>
<sequence>MDLASLRAQQIELASSVCREDRLDKDPPAFIGGADVGFEQGGEVTRAAMVLLKYPSLELVEYKVARIATTMPYIPGFLSFREYPALLAAWEQLSQKPDLLFVDGHGISHPRRLGVASHFGLLVDVPTIGVAKKRLCGKFEPLSAEPGALSPLMDKGEQLAWVWRSKARCNPLFIATGHRVSTDSALAWVQRCMKGYRLPEPTRWADAVASGRPAFVRWQEIQR</sequence>
<reference key="1">
    <citation type="journal article" date="2011" name="J. Bacteriol.">
        <title>Comparative genomics of 28 Salmonella enterica isolates: evidence for CRISPR-mediated adaptive sublineage evolution.</title>
        <authorList>
            <person name="Fricke W.F."/>
            <person name="Mammel M.K."/>
            <person name="McDermott P.F."/>
            <person name="Tartera C."/>
            <person name="White D.G."/>
            <person name="Leclerc J.E."/>
            <person name="Ravel J."/>
            <person name="Cebula T.A."/>
        </authorList>
    </citation>
    <scope>NUCLEOTIDE SEQUENCE [LARGE SCALE GENOMIC DNA]</scope>
    <source>
        <strain>SL483</strain>
    </source>
</reference>
<name>NFI_SALA4</name>
<gene>
    <name evidence="1" type="primary">nfi</name>
    <name type="ordered locus">SeAg_B4412</name>
</gene>
<protein>
    <recommendedName>
        <fullName evidence="1">Endonuclease V</fullName>
        <ecNumber evidence="1">3.1.21.7</ecNumber>
    </recommendedName>
    <alternativeName>
        <fullName evidence="1">Deoxyinosine 3'endonuclease</fullName>
    </alternativeName>
    <alternativeName>
        <fullName evidence="1">Deoxyribonuclease V</fullName>
        <shortName evidence="1">DNase V</shortName>
    </alternativeName>
</protein>
<dbReference type="EC" id="3.1.21.7" evidence="1"/>
<dbReference type="EMBL" id="CP001138">
    <property type="protein sequence ID" value="ACH52341.1"/>
    <property type="molecule type" value="Genomic_DNA"/>
</dbReference>
<dbReference type="RefSeq" id="WP_000362359.1">
    <property type="nucleotide sequence ID" value="NC_011149.1"/>
</dbReference>
<dbReference type="SMR" id="B5F1I1"/>
<dbReference type="KEGG" id="sea:SeAg_B4412"/>
<dbReference type="HOGENOM" id="CLU_047631_1_0_6"/>
<dbReference type="Proteomes" id="UP000008819">
    <property type="component" value="Chromosome"/>
</dbReference>
<dbReference type="GO" id="GO:0005737">
    <property type="term" value="C:cytoplasm"/>
    <property type="evidence" value="ECO:0007669"/>
    <property type="project" value="UniProtKB-SubCell"/>
</dbReference>
<dbReference type="GO" id="GO:0043737">
    <property type="term" value="F:deoxyribonuclease V activity"/>
    <property type="evidence" value="ECO:0007669"/>
    <property type="project" value="UniProtKB-UniRule"/>
</dbReference>
<dbReference type="GO" id="GO:0000287">
    <property type="term" value="F:magnesium ion binding"/>
    <property type="evidence" value="ECO:0007669"/>
    <property type="project" value="UniProtKB-UniRule"/>
</dbReference>
<dbReference type="GO" id="GO:0016891">
    <property type="term" value="F:RNA endonuclease activity, producing 5'-phosphomonoesters"/>
    <property type="evidence" value="ECO:0007669"/>
    <property type="project" value="TreeGrafter"/>
</dbReference>
<dbReference type="GO" id="GO:0003727">
    <property type="term" value="F:single-stranded RNA binding"/>
    <property type="evidence" value="ECO:0007669"/>
    <property type="project" value="TreeGrafter"/>
</dbReference>
<dbReference type="GO" id="GO:0006281">
    <property type="term" value="P:DNA repair"/>
    <property type="evidence" value="ECO:0007669"/>
    <property type="project" value="UniProtKB-UniRule"/>
</dbReference>
<dbReference type="CDD" id="cd06559">
    <property type="entry name" value="Endonuclease_V"/>
    <property type="match status" value="1"/>
</dbReference>
<dbReference type="FunFam" id="3.30.2170.10:FF:000001">
    <property type="entry name" value="Endonuclease V"/>
    <property type="match status" value="1"/>
</dbReference>
<dbReference type="Gene3D" id="3.30.2170.10">
    <property type="entry name" value="archaeoglobus fulgidus dsm 4304 superfamily"/>
    <property type="match status" value="1"/>
</dbReference>
<dbReference type="HAMAP" id="MF_00801">
    <property type="entry name" value="Endonuclease_5"/>
    <property type="match status" value="1"/>
</dbReference>
<dbReference type="InterPro" id="IPR007581">
    <property type="entry name" value="Endonuclease-V"/>
</dbReference>
<dbReference type="NCBIfam" id="NF008629">
    <property type="entry name" value="PRK11617.1"/>
    <property type="match status" value="1"/>
</dbReference>
<dbReference type="PANTHER" id="PTHR28511">
    <property type="entry name" value="ENDONUCLEASE V"/>
    <property type="match status" value="1"/>
</dbReference>
<dbReference type="PANTHER" id="PTHR28511:SF1">
    <property type="entry name" value="ENDONUCLEASE V"/>
    <property type="match status" value="1"/>
</dbReference>
<dbReference type="Pfam" id="PF04493">
    <property type="entry name" value="Endonuclease_5"/>
    <property type="match status" value="1"/>
</dbReference>